<evidence type="ECO:0000250" key="1"/>
<evidence type="ECO:0000250" key="2">
    <source>
        <dbReference type="UniProtKB" id="Q8IV63"/>
    </source>
</evidence>
<evidence type="ECO:0000250" key="3">
    <source>
        <dbReference type="UniProtKB" id="Q8K3G5"/>
    </source>
</evidence>
<evidence type="ECO:0000255" key="4">
    <source>
        <dbReference type="PROSITE-ProRule" id="PRU00159"/>
    </source>
</evidence>
<evidence type="ECO:0000256" key="5">
    <source>
        <dbReference type="SAM" id="MobiDB-lite"/>
    </source>
</evidence>
<evidence type="ECO:0000305" key="6"/>
<accession>Q2YDN8</accession>
<protein>
    <recommendedName>
        <fullName>Serine/threonine-protein kinase VRK3</fullName>
        <ecNumber>2.7.11.22</ecNumber>
    </recommendedName>
    <alternativeName>
        <fullName>Vaccinia-related kinase 3</fullName>
    </alternativeName>
</protein>
<name>VRK3_BOVIN</name>
<gene>
    <name type="primary">VRK3</name>
</gene>
<proteinExistence type="evidence at transcript level"/>
<reference key="1">
    <citation type="submission" date="2005-11" db="EMBL/GenBank/DDBJ databases">
        <authorList>
            <consortium name="NIH - Mammalian Gene Collection (MGC) project"/>
        </authorList>
    </citation>
    <scope>NUCLEOTIDE SEQUENCE [LARGE SCALE MRNA]</scope>
    <source>
        <strain>Crossbred X Angus</strain>
        <tissue>Liver</tissue>
    </source>
</reference>
<organism>
    <name type="scientific">Bos taurus</name>
    <name type="common">Bovine</name>
    <dbReference type="NCBI Taxonomy" id="9913"/>
    <lineage>
        <taxon>Eukaryota</taxon>
        <taxon>Metazoa</taxon>
        <taxon>Chordata</taxon>
        <taxon>Craniata</taxon>
        <taxon>Vertebrata</taxon>
        <taxon>Euteleostomi</taxon>
        <taxon>Mammalia</taxon>
        <taxon>Eutheria</taxon>
        <taxon>Laurasiatheria</taxon>
        <taxon>Artiodactyla</taxon>
        <taxon>Ruminantia</taxon>
        <taxon>Pecora</taxon>
        <taxon>Bovidae</taxon>
        <taxon>Bovinae</taxon>
        <taxon>Bos</taxon>
    </lineage>
</organism>
<comment type="function">
    <text evidence="2 3">Plays a role in the regulation of the cell cycle by phosphorylating the nuclear envelope protein barrier-to-autointegration factor/BAF that is required for disassembly and reassembly, respectively, of the nuclear envelope during mitosis. Under normal physiological conditions, negatively regulates ERK activity along with VHR phosphatase in the nucleus, causing timely and transient action of ERK. Stress conditions activate CDK5 which phosphorylates VRK3 to increase VHR phosphatase activity and suppress prolonged ERK activation that causes cell death. For example, upon glutamate induction, promotes nuclear localization of HSP70/HSPA1A to inhibit ERK activation via VHR phosphatase.</text>
</comment>
<comment type="catalytic activity">
    <reaction evidence="2">
        <text>L-seryl-[protein] + ATP = O-phospho-L-seryl-[protein] + ADP + H(+)</text>
        <dbReference type="Rhea" id="RHEA:17989"/>
        <dbReference type="Rhea" id="RHEA-COMP:9863"/>
        <dbReference type="Rhea" id="RHEA-COMP:11604"/>
        <dbReference type="ChEBI" id="CHEBI:15378"/>
        <dbReference type="ChEBI" id="CHEBI:29999"/>
        <dbReference type="ChEBI" id="CHEBI:30616"/>
        <dbReference type="ChEBI" id="CHEBI:83421"/>
        <dbReference type="ChEBI" id="CHEBI:456216"/>
        <dbReference type="EC" id="2.7.11.22"/>
    </reaction>
</comment>
<comment type="subunit">
    <text evidence="1 2">Interacts with DUSP3. Interacts with RAN. Interacts with HSP70/HSPA1A.</text>
</comment>
<comment type="subcellular location">
    <subcellularLocation>
        <location evidence="2">Nucleus</location>
    </subcellularLocation>
    <subcellularLocation>
        <location evidence="2">Cytoplasm</location>
    </subcellularLocation>
    <text evidence="2">Under oxidative stress, migrates from the nucleus to the cytoplasm.</text>
</comment>
<comment type="PTM">
    <text evidence="2">Phosphorylated at Ser-106 by CDK5; leading to protection of the cell against H2O2-induced apoptosis.</text>
</comment>
<comment type="PTM">
    <text evidence="2">Ubiquitinated by RNF144A.</text>
</comment>
<comment type="similarity">
    <text evidence="6">Belongs to the protein kinase superfamily. CK1 Ser/Thr protein kinase family. VRK subfamily.</text>
</comment>
<comment type="caution">
    <text evidence="6">Inactive as a kinase due to its inability to bind ATP.</text>
</comment>
<keyword id="KW-0963">Cytoplasm</keyword>
<keyword id="KW-0547">Nucleotide-binding</keyword>
<keyword id="KW-0539">Nucleus</keyword>
<keyword id="KW-0597">Phosphoprotein</keyword>
<keyword id="KW-1185">Reference proteome</keyword>
<keyword id="KW-0808">Transferase</keyword>
<keyword id="KW-0832">Ubl conjugation</keyword>
<sequence length="451" mass="50549">MICPDCGKGIEATFKFCPYCGKPLPAEKHEGSQSFVKPFTSSSQGSRRKTNTSSETSSKKVKWCSYAASPSLPLPSEGKSSGSEDTLSTSGKPKGHLSRSPTPRSSPQTTRQSPQTLKRSRMTASLEALPVGTVLTDKSGQHWKLRCLQTRDDQGILYEAESDSTTGSESSPQKQRFSLKLDAKDGRLFNEQNFFQRAAKPLQVNKWKKLYSIPQLAIPTCIGFGVHQDKYRFLVFPTLGRSLQSILDDFPKHVMSVRSVFQMACRLLDALEFLHENEYVHGNVTAENIFVNPENLCQVTLAGYGFTFRYSPGGRHVAYTEGSRSPHEGHLEFISMDLHKGCGPSRRSDLQTLGYCLLKWLYGTLPWTNCLPNTEEIVKLKQKFLDNPEGLVGQCSRWITPSETLQEYLKVVMALQYEEKPPYSTLRNELEALLQDLRASAYDPLDLQVVP</sequence>
<dbReference type="EC" id="2.7.11.22"/>
<dbReference type="EMBL" id="BC110135">
    <property type="protein sequence ID" value="AAI10136.1"/>
    <property type="molecule type" value="mRNA"/>
</dbReference>
<dbReference type="RefSeq" id="NP_001039716.1">
    <property type="nucleotide sequence ID" value="NM_001046251.2"/>
</dbReference>
<dbReference type="RefSeq" id="XP_005219336.1">
    <property type="nucleotide sequence ID" value="XM_005219279.5"/>
</dbReference>
<dbReference type="RefSeq" id="XP_005219337.1">
    <property type="nucleotide sequence ID" value="XM_005219280.5"/>
</dbReference>
<dbReference type="RefSeq" id="XP_005219338.1">
    <property type="nucleotide sequence ID" value="XM_005219281.5"/>
</dbReference>
<dbReference type="RefSeq" id="XP_010813351.1">
    <property type="nucleotide sequence ID" value="XM_010815049.2"/>
</dbReference>
<dbReference type="RefSeq" id="XP_015313652.1">
    <property type="nucleotide sequence ID" value="XM_015458166.1"/>
</dbReference>
<dbReference type="SMR" id="Q2YDN8"/>
<dbReference type="FunCoup" id="Q2YDN8">
    <property type="interactions" value="2309"/>
</dbReference>
<dbReference type="STRING" id="9913.ENSBTAP00000007054"/>
<dbReference type="PaxDb" id="9913-ENSBTAP00000007054"/>
<dbReference type="Ensembl" id="ENSBTAT00000007054.4">
    <property type="protein sequence ID" value="ENSBTAP00000007054.3"/>
    <property type="gene ID" value="ENSBTAG00000005367.5"/>
</dbReference>
<dbReference type="GeneID" id="520302"/>
<dbReference type="KEGG" id="bta:520302"/>
<dbReference type="CTD" id="51231"/>
<dbReference type="VEuPathDB" id="HostDB:ENSBTAG00000005367"/>
<dbReference type="VGNC" id="VGNC:36836">
    <property type="gene designation" value="VRK3"/>
</dbReference>
<dbReference type="eggNOG" id="KOG1164">
    <property type="taxonomic scope" value="Eukaryota"/>
</dbReference>
<dbReference type="GeneTree" id="ENSGT00940000158111"/>
<dbReference type="HOGENOM" id="CLU_019279_4_4_1"/>
<dbReference type="InParanoid" id="Q2YDN8"/>
<dbReference type="OMA" id="VMTLEYE"/>
<dbReference type="OrthoDB" id="2687620at2759"/>
<dbReference type="TreeFam" id="TF106473"/>
<dbReference type="Reactome" id="R-BTA-202670">
    <property type="pathway name" value="ERKs are inactivated"/>
</dbReference>
<dbReference type="Proteomes" id="UP000009136">
    <property type="component" value="Chromosome 18"/>
</dbReference>
<dbReference type="Bgee" id="ENSBTAG00000005367">
    <property type="expression patterns" value="Expressed in semen and 107 other cell types or tissues"/>
</dbReference>
<dbReference type="GO" id="GO:0005737">
    <property type="term" value="C:cytoplasm"/>
    <property type="evidence" value="ECO:0000318"/>
    <property type="project" value="GO_Central"/>
</dbReference>
<dbReference type="GO" id="GO:0005654">
    <property type="term" value="C:nucleoplasm"/>
    <property type="evidence" value="ECO:0007669"/>
    <property type="project" value="Ensembl"/>
</dbReference>
<dbReference type="GO" id="GO:0005634">
    <property type="term" value="C:nucleus"/>
    <property type="evidence" value="ECO:0000318"/>
    <property type="project" value="GO_Central"/>
</dbReference>
<dbReference type="GO" id="GO:0005524">
    <property type="term" value="F:ATP binding"/>
    <property type="evidence" value="ECO:0007669"/>
    <property type="project" value="InterPro"/>
</dbReference>
<dbReference type="GO" id="GO:0072542">
    <property type="term" value="F:protein phosphatase activator activity"/>
    <property type="evidence" value="ECO:0007669"/>
    <property type="project" value="Ensembl"/>
</dbReference>
<dbReference type="GO" id="GO:0019903">
    <property type="term" value="F:protein phosphatase binding"/>
    <property type="evidence" value="ECO:0007669"/>
    <property type="project" value="Ensembl"/>
</dbReference>
<dbReference type="GO" id="GO:0004674">
    <property type="term" value="F:protein serine/threonine kinase activity"/>
    <property type="evidence" value="ECO:0000318"/>
    <property type="project" value="GO_Central"/>
</dbReference>
<dbReference type="GO" id="GO:0006974">
    <property type="term" value="P:DNA damage response"/>
    <property type="evidence" value="ECO:0000318"/>
    <property type="project" value="GO_Central"/>
</dbReference>
<dbReference type="GO" id="GO:0070373">
    <property type="term" value="P:negative regulation of ERK1 and ERK2 cascade"/>
    <property type="evidence" value="ECO:0007669"/>
    <property type="project" value="Ensembl"/>
</dbReference>
<dbReference type="GO" id="GO:0007165">
    <property type="term" value="P:signal transduction"/>
    <property type="evidence" value="ECO:0000318"/>
    <property type="project" value="GO_Central"/>
</dbReference>
<dbReference type="GO" id="GO:0007519">
    <property type="term" value="P:skeletal muscle tissue development"/>
    <property type="evidence" value="ECO:0007669"/>
    <property type="project" value="Ensembl"/>
</dbReference>
<dbReference type="FunFam" id="1.10.510.10:FF:000516">
    <property type="entry name" value="VRK serine/threonine kinase 3"/>
    <property type="match status" value="1"/>
</dbReference>
<dbReference type="Gene3D" id="1.10.510.10">
    <property type="entry name" value="Transferase(Phosphotransferase) domain 1"/>
    <property type="match status" value="1"/>
</dbReference>
<dbReference type="InterPro" id="IPR050235">
    <property type="entry name" value="CK1_Ser-Thr_kinase"/>
</dbReference>
<dbReference type="InterPro" id="IPR011009">
    <property type="entry name" value="Kinase-like_dom_sf"/>
</dbReference>
<dbReference type="InterPro" id="IPR000719">
    <property type="entry name" value="Prot_kinase_dom"/>
</dbReference>
<dbReference type="InterPro" id="IPR001245">
    <property type="entry name" value="Ser-Thr/Tyr_kinase_cat_dom"/>
</dbReference>
<dbReference type="InterPro" id="IPR026870">
    <property type="entry name" value="Zinc_ribbon_dom"/>
</dbReference>
<dbReference type="PANTHER" id="PTHR11909">
    <property type="entry name" value="CASEIN KINASE-RELATED"/>
    <property type="match status" value="1"/>
</dbReference>
<dbReference type="Pfam" id="PF07714">
    <property type="entry name" value="PK_Tyr_Ser-Thr"/>
    <property type="match status" value="1"/>
</dbReference>
<dbReference type="Pfam" id="PF13240">
    <property type="entry name" value="Zn_Ribbon_1"/>
    <property type="match status" value="1"/>
</dbReference>
<dbReference type="SMART" id="SM00220">
    <property type="entry name" value="S_TKc"/>
    <property type="match status" value="1"/>
</dbReference>
<dbReference type="SUPFAM" id="SSF56112">
    <property type="entry name" value="Protein kinase-like (PK-like)"/>
    <property type="match status" value="1"/>
</dbReference>
<dbReference type="PROSITE" id="PS50011">
    <property type="entry name" value="PROTEIN_KINASE_DOM"/>
    <property type="match status" value="1"/>
</dbReference>
<feature type="chain" id="PRO_0000296678" description="Serine/threonine-protein kinase VRK3">
    <location>
        <begin position="1"/>
        <end position="451"/>
    </location>
</feature>
<feature type="domain" description="Protein kinase" evidence="4">
    <location>
        <begin position="123"/>
        <end position="434"/>
    </location>
</feature>
<feature type="region of interest" description="Disordered" evidence="5">
    <location>
        <begin position="28"/>
        <end position="61"/>
    </location>
</feature>
<feature type="region of interest" description="Disordered" evidence="5">
    <location>
        <begin position="74"/>
        <end position="125"/>
    </location>
</feature>
<feature type="short sequence motif" description="Nuclear localization signal" evidence="1">
    <location>
        <begin position="47"/>
        <end position="62"/>
    </location>
</feature>
<feature type="compositionally biased region" description="Polar residues" evidence="5">
    <location>
        <begin position="32"/>
        <end position="45"/>
    </location>
</feature>
<feature type="compositionally biased region" description="Polar residues" evidence="5">
    <location>
        <begin position="78"/>
        <end position="91"/>
    </location>
</feature>
<feature type="compositionally biased region" description="Low complexity" evidence="5">
    <location>
        <begin position="98"/>
        <end position="116"/>
    </location>
</feature>
<feature type="modified residue" description="Phosphoserine" evidence="2">
    <location>
        <position position="53"/>
    </location>
</feature>
<feature type="modified residue" description="Phosphoserine" evidence="2">
    <location>
        <position position="57"/>
    </location>
</feature>
<feature type="modified residue" description="Phosphoserine" evidence="2">
    <location>
        <position position="80"/>
    </location>
</feature>
<feature type="modified residue" description="Phosphoserine" evidence="2">
    <location>
        <position position="81"/>
    </location>
</feature>
<feature type="modified residue" description="Phosphoserine" evidence="2">
    <location>
        <position position="88"/>
    </location>
</feature>
<feature type="modified residue" description="Phosphoserine" evidence="2">
    <location>
        <position position="106"/>
    </location>
</feature>